<sequence length="298" mass="32123">MDQKQIEEIVRSVMASMGQDVPQPVAPSTQEGAKPQCAAPTVTESCALDLGSAEAKAWIGVENPHRADVLTELRRSTAARVCTGRAGPRPRTQALLRFLADHSRSKDTVLKEVPEEWGKAQGLLEVRSEISDKNLYLTRPDMGRRLSPEAIDALKSQCVMNPDVQVVVSDGLSTDAITANYEEILPPLLAGLKQAGLNVGTPFFVRYGRVKIEDQIGEILGAKVVILLVGERPGLGQSESLSCYAVYSPRVATTVEADRTCISNIHQGGTPPVEAAAVIVDLAKRMLEQKASGINMTR</sequence>
<reference key="1">
    <citation type="journal article" date="2001" name="Nature">
        <title>Complete genome sequence of a multiple drug resistant Salmonella enterica serovar Typhi CT18.</title>
        <authorList>
            <person name="Parkhill J."/>
            <person name="Dougan G."/>
            <person name="James K.D."/>
            <person name="Thomson N.R."/>
            <person name="Pickard D."/>
            <person name="Wain J."/>
            <person name="Churcher C.M."/>
            <person name="Mungall K.L."/>
            <person name="Bentley S.D."/>
            <person name="Holden M.T.G."/>
            <person name="Sebaihia M."/>
            <person name="Baker S."/>
            <person name="Basham D."/>
            <person name="Brooks K."/>
            <person name="Chillingworth T."/>
            <person name="Connerton P."/>
            <person name="Cronin A."/>
            <person name="Davis P."/>
            <person name="Davies R.M."/>
            <person name="Dowd L."/>
            <person name="White N."/>
            <person name="Farrar J."/>
            <person name="Feltwell T."/>
            <person name="Hamlin N."/>
            <person name="Haque A."/>
            <person name="Hien T.T."/>
            <person name="Holroyd S."/>
            <person name="Jagels K."/>
            <person name="Krogh A."/>
            <person name="Larsen T.S."/>
            <person name="Leather S."/>
            <person name="Moule S."/>
            <person name="O'Gaora P."/>
            <person name="Parry C."/>
            <person name="Quail M.A."/>
            <person name="Rutherford K.M."/>
            <person name="Simmonds M."/>
            <person name="Skelton J."/>
            <person name="Stevens K."/>
            <person name="Whitehead S."/>
            <person name="Barrell B.G."/>
        </authorList>
    </citation>
    <scope>NUCLEOTIDE SEQUENCE [LARGE SCALE GENOMIC DNA]</scope>
    <source>
        <strain>CT18</strain>
    </source>
</reference>
<reference key="2">
    <citation type="journal article" date="2003" name="J. Bacteriol.">
        <title>Comparative genomics of Salmonella enterica serovar Typhi strains Ty2 and CT18.</title>
        <authorList>
            <person name="Deng W."/>
            <person name="Liou S.-R."/>
            <person name="Plunkett G. III"/>
            <person name="Mayhew G.F."/>
            <person name="Rose D.J."/>
            <person name="Burland V."/>
            <person name="Kodoyianni V."/>
            <person name="Schwartz D.C."/>
            <person name="Blattner F.R."/>
        </authorList>
    </citation>
    <scope>NUCLEOTIDE SEQUENCE [LARGE SCALE GENOMIC DNA]</scope>
    <source>
        <strain>ATCC 700931 / Ty2</strain>
    </source>
</reference>
<protein>
    <recommendedName>
        <fullName evidence="1">Ethanolamine ammonia-lyase small subunit</fullName>
        <shortName evidence="1">EAL small subunit</shortName>
        <ecNumber evidence="1">4.3.1.7</ecNumber>
    </recommendedName>
</protein>
<dbReference type="EC" id="4.3.1.7" evidence="1"/>
<dbReference type="EMBL" id="AL513382">
    <property type="protein sequence ID" value="CAD07688.1"/>
    <property type="molecule type" value="Genomic_DNA"/>
</dbReference>
<dbReference type="EMBL" id="AE014613">
    <property type="protein sequence ID" value="AAO68119.1"/>
    <property type="molecule type" value="Genomic_DNA"/>
</dbReference>
<dbReference type="RefSeq" id="NP_456992.1">
    <property type="nucleotide sequence ID" value="NC_003198.1"/>
</dbReference>
<dbReference type="RefSeq" id="WP_000372351.1">
    <property type="nucleotide sequence ID" value="NZ_WSUR01000025.1"/>
</dbReference>
<dbReference type="SMR" id="Q8Z4U3"/>
<dbReference type="STRING" id="220341.gene:17586592"/>
<dbReference type="KEGG" id="stt:t0401"/>
<dbReference type="KEGG" id="sty:STY2694"/>
<dbReference type="PATRIC" id="fig|220341.7.peg.2731"/>
<dbReference type="eggNOG" id="COG4302">
    <property type="taxonomic scope" value="Bacteria"/>
</dbReference>
<dbReference type="HOGENOM" id="CLU_068224_2_0_6"/>
<dbReference type="OMA" id="FQFAHAQ"/>
<dbReference type="OrthoDB" id="114248at2"/>
<dbReference type="UniPathway" id="UPA00560"/>
<dbReference type="Proteomes" id="UP000000541">
    <property type="component" value="Chromosome"/>
</dbReference>
<dbReference type="Proteomes" id="UP000002670">
    <property type="component" value="Chromosome"/>
</dbReference>
<dbReference type="GO" id="GO:0009350">
    <property type="term" value="C:ethanolamine ammonia-lyase complex"/>
    <property type="evidence" value="ECO:0007669"/>
    <property type="project" value="UniProtKB-UniRule"/>
</dbReference>
<dbReference type="GO" id="GO:0031471">
    <property type="term" value="C:ethanolamine degradation polyhedral organelle"/>
    <property type="evidence" value="ECO:0007669"/>
    <property type="project" value="UniProtKB-UniRule"/>
</dbReference>
<dbReference type="GO" id="GO:0031419">
    <property type="term" value="F:cobalamin binding"/>
    <property type="evidence" value="ECO:0007669"/>
    <property type="project" value="UniProtKB-UniRule"/>
</dbReference>
<dbReference type="GO" id="GO:0008851">
    <property type="term" value="F:ethanolamine ammonia-lyase activity"/>
    <property type="evidence" value="ECO:0007669"/>
    <property type="project" value="UniProtKB-UniRule"/>
</dbReference>
<dbReference type="GO" id="GO:0006520">
    <property type="term" value="P:amino acid metabolic process"/>
    <property type="evidence" value="ECO:0007669"/>
    <property type="project" value="InterPro"/>
</dbReference>
<dbReference type="GO" id="GO:0046336">
    <property type="term" value="P:ethanolamine catabolic process"/>
    <property type="evidence" value="ECO:0007669"/>
    <property type="project" value="UniProtKB-UniRule"/>
</dbReference>
<dbReference type="FunFam" id="3.40.50.11240:FF:000001">
    <property type="entry name" value="Ethanolamine ammonia-lyase light chain"/>
    <property type="match status" value="1"/>
</dbReference>
<dbReference type="Gene3D" id="6.10.140.690">
    <property type="match status" value="1"/>
</dbReference>
<dbReference type="Gene3D" id="6.10.250.2060">
    <property type="match status" value="1"/>
</dbReference>
<dbReference type="Gene3D" id="3.40.50.11240">
    <property type="entry name" value="Ethanolamine ammonia-lyase light chain (EutC)"/>
    <property type="match status" value="1"/>
</dbReference>
<dbReference type="HAMAP" id="MF_00601">
    <property type="entry name" value="EutC"/>
    <property type="match status" value="1"/>
</dbReference>
<dbReference type="InterPro" id="IPR009246">
    <property type="entry name" value="EutC"/>
</dbReference>
<dbReference type="InterPro" id="IPR042251">
    <property type="entry name" value="EutC_C"/>
</dbReference>
<dbReference type="NCBIfam" id="NF003971">
    <property type="entry name" value="PRK05465.1"/>
    <property type="match status" value="1"/>
</dbReference>
<dbReference type="PANTHER" id="PTHR39330">
    <property type="entry name" value="ETHANOLAMINE AMMONIA-LYASE LIGHT CHAIN"/>
    <property type="match status" value="1"/>
</dbReference>
<dbReference type="PANTHER" id="PTHR39330:SF1">
    <property type="entry name" value="ETHANOLAMINE AMMONIA-LYASE SMALL SUBUNIT"/>
    <property type="match status" value="1"/>
</dbReference>
<dbReference type="Pfam" id="PF05985">
    <property type="entry name" value="EutC"/>
    <property type="match status" value="1"/>
</dbReference>
<dbReference type="PIRSF" id="PIRSF018982">
    <property type="entry name" value="EutC"/>
    <property type="match status" value="1"/>
</dbReference>
<gene>
    <name evidence="1" type="primary">eutC</name>
    <name type="ordered locus">STY2694</name>
    <name type="ordered locus">t0401</name>
</gene>
<name>EUTC_SALTI</name>
<keyword id="KW-1283">Bacterial microcompartment</keyword>
<keyword id="KW-0846">Cobalamin</keyword>
<keyword id="KW-0170">Cobalt</keyword>
<keyword id="KW-0456">Lyase</keyword>
<accession>Q8Z4U3</accession>
<evidence type="ECO:0000255" key="1">
    <source>
        <dbReference type="HAMAP-Rule" id="MF_00601"/>
    </source>
</evidence>
<comment type="function">
    <text evidence="1">Catalyzes the deamination of various vicinal amino-alcohols to oxo compounds. Allows this organism to utilize ethanolamine as the sole source of nitrogen and carbon in the presence of external vitamin B12.</text>
</comment>
<comment type="catalytic activity">
    <reaction evidence="1">
        <text>ethanolamine = acetaldehyde + NH4(+)</text>
        <dbReference type="Rhea" id="RHEA:15313"/>
        <dbReference type="ChEBI" id="CHEBI:15343"/>
        <dbReference type="ChEBI" id="CHEBI:28938"/>
        <dbReference type="ChEBI" id="CHEBI:57603"/>
        <dbReference type="EC" id="4.3.1.7"/>
    </reaction>
</comment>
<comment type="cofactor">
    <cofactor evidence="1">
        <name>adenosylcob(III)alamin</name>
        <dbReference type="ChEBI" id="CHEBI:18408"/>
    </cofactor>
    <text evidence="1">Binds between the large and small subunits.</text>
</comment>
<comment type="pathway">
    <text evidence="1">Amine and polyamine degradation; ethanolamine degradation.</text>
</comment>
<comment type="subunit">
    <text evidence="1">The basic unit is a heterodimer which dimerizes to form tetramers. The heterotetramers trimerize; 6 large subunits form a core ring with 6 small subunits projecting outwards.</text>
</comment>
<comment type="subcellular location">
    <subcellularLocation>
        <location evidence="1">Bacterial microcompartment</location>
    </subcellularLocation>
</comment>
<comment type="similarity">
    <text evidence="1">Belongs to the EutC family.</text>
</comment>
<proteinExistence type="inferred from homology"/>
<feature type="chain" id="PRO_0000206002" description="Ethanolamine ammonia-lyase small subunit">
    <location>
        <begin position="1"/>
        <end position="298"/>
    </location>
</feature>
<feature type="binding site" evidence="1">
    <location>
        <position position="210"/>
    </location>
    <ligand>
        <name>adenosylcob(III)alamin</name>
        <dbReference type="ChEBI" id="CHEBI:18408"/>
    </ligand>
</feature>
<feature type="binding site" evidence="1">
    <location>
        <position position="231"/>
    </location>
    <ligand>
        <name>adenosylcob(III)alamin</name>
        <dbReference type="ChEBI" id="CHEBI:18408"/>
    </ligand>
</feature>
<feature type="binding site" evidence="1">
    <location>
        <position position="261"/>
    </location>
    <ligand>
        <name>adenosylcob(III)alamin</name>
        <dbReference type="ChEBI" id="CHEBI:18408"/>
    </ligand>
</feature>
<organism>
    <name type="scientific">Salmonella typhi</name>
    <dbReference type="NCBI Taxonomy" id="90370"/>
    <lineage>
        <taxon>Bacteria</taxon>
        <taxon>Pseudomonadati</taxon>
        <taxon>Pseudomonadota</taxon>
        <taxon>Gammaproteobacteria</taxon>
        <taxon>Enterobacterales</taxon>
        <taxon>Enterobacteriaceae</taxon>
        <taxon>Salmonella</taxon>
    </lineage>
</organism>